<sequence length="179" mass="20154">MHNDLKEVLLTEEDIQNICKELGAQLTKDYQGKPLVCVGILKGSAMFMSDLIKRIDTHLSIDFMDVSSYHGGTESTGEVQIIKDLGSSIENKDVLIIEDILETGTTLKSITELLQSRKVNSLEIVTLLDKPNRRKADIEAKYVGKKIPDEFVVGYGLDYRELYRNLPYIGTLKPEVYSN</sequence>
<keyword id="KW-0963">Cytoplasm</keyword>
<keyword id="KW-0328">Glycosyltransferase</keyword>
<keyword id="KW-0460">Magnesium</keyword>
<keyword id="KW-0479">Metal-binding</keyword>
<keyword id="KW-0547">Nucleotide-binding</keyword>
<keyword id="KW-0660">Purine salvage</keyword>
<keyword id="KW-0808">Transferase</keyword>
<protein>
    <recommendedName>
        <fullName>Hypoxanthine-guanine phosphoribosyltransferase</fullName>
        <shortName>HGPRT</shortName>
        <shortName>HGPRTase</shortName>
        <ecNumber evidence="3">2.4.2.8</ecNumber>
    </recommendedName>
</protein>
<accession>P99085</accession>
<accession>Q99W93</accession>
<gene>
    <name type="primary">hpt</name>
    <name type="ordered locus">SA0468</name>
</gene>
<proteinExistence type="evidence at protein level"/>
<reference key="1">
    <citation type="journal article" date="2001" name="Lancet">
        <title>Whole genome sequencing of meticillin-resistant Staphylococcus aureus.</title>
        <authorList>
            <person name="Kuroda M."/>
            <person name="Ohta T."/>
            <person name="Uchiyama I."/>
            <person name="Baba T."/>
            <person name="Yuzawa H."/>
            <person name="Kobayashi I."/>
            <person name="Cui L."/>
            <person name="Oguchi A."/>
            <person name="Aoki K."/>
            <person name="Nagai Y."/>
            <person name="Lian J.-Q."/>
            <person name="Ito T."/>
            <person name="Kanamori M."/>
            <person name="Matsumaru H."/>
            <person name="Maruyama A."/>
            <person name="Murakami H."/>
            <person name="Hosoyama A."/>
            <person name="Mizutani-Ui Y."/>
            <person name="Takahashi N.K."/>
            <person name="Sawano T."/>
            <person name="Inoue R."/>
            <person name="Kaito C."/>
            <person name="Sekimizu K."/>
            <person name="Hirakawa H."/>
            <person name="Kuhara S."/>
            <person name="Goto S."/>
            <person name="Yabuzaki J."/>
            <person name="Kanehisa M."/>
            <person name="Yamashita A."/>
            <person name="Oshima K."/>
            <person name="Furuya K."/>
            <person name="Yoshino C."/>
            <person name="Shiba T."/>
            <person name="Hattori M."/>
            <person name="Ogasawara N."/>
            <person name="Hayashi H."/>
            <person name="Hiramatsu K."/>
        </authorList>
    </citation>
    <scope>NUCLEOTIDE SEQUENCE [LARGE SCALE GENOMIC DNA]</scope>
    <source>
        <strain>N315</strain>
    </source>
</reference>
<reference key="2">
    <citation type="journal article" date="2005" name="J. Microbiol. Methods">
        <title>Correlation of proteomic and transcriptomic profiles of Staphylococcus aureus during the post-exponential phase of growth.</title>
        <authorList>
            <person name="Scherl A."/>
            <person name="Francois P."/>
            <person name="Bento M."/>
            <person name="Deshusses J.M."/>
            <person name="Charbonnier Y."/>
            <person name="Converset V."/>
            <person name="Huyghe A."/>
            <person name="Walter N."/>
            <person name="Hoogland C."/>
            <person name="Appel R.D."/>
            <person name="Sanchez J.-C."/>
            <person name="Zimmermann-Ivol C.G."/>
            <person name="Corthals G.L."/>
            <person name="Hochstrasser D.F."/>
            <person name="Schrenzel J."/>
        </authorList>
    </citation>
    <scope>IDENTIFICATION BY MASS SPECTROMETRY</scope>
    <source>
        <strain>N315</strain>
    </source>
</reference>
<name>HGPRT_STAAN</name>
<feature type="chain" id="PRO_0000139614" description="Hypoxanthine-guanine phosphoribosyltransferase">
    <location>
        <begin position="1"/>
        <end position="179"/>
    </location>
</feature>
<feature type="active site" description="Proton acceptor" evidence="2">
    <location>
        <position position="102"/>
    </location>
</feature>
<feature type="binding site" evidence="3">
    <location>
        <position position="42"/>
    </location>
    <ligand>
        <name>diphosphate</name>
        <dbReference type="ChEBI" id="CHEBI:33019"/>
    </ligand>
</feature>
<feature type="binding site" evidence="3">
    <location>
        <position position="43"/>
    </location>
    <ligand>
        <name>diphosphate</name>
        <dbReference type="ChEBI" id="CHEBI:33019"/>
    </ligand>
</feature>
<feature type="binding site" evidence="3">
    <location>
        <position position="98"/>
    </location>
    <ligand>
        <name>Mg(2+)</name>
        <dbReference type="ChEBI" id="CHEBI:18420"/>
    </ligand>
</feature>
<feature type="binding site" evidence="3">
    <location>
        <position position="99"/>
    </location>
    <ligand>
        <name>Mg(2+)</name>
        <dbReference type="ChEBI" id="CHEBI:18420"/>
    </ligand>
</feature>
<feature type="binding site" evidence="3">
    <location>
        <position position="130"/>
    </location>
    <ligand>
        <name>GMP</name>
        <dbReference type="ChEBI" id="CHEBI:58115"/>
    </ligand>
</feature>
<feature type="binding site" evidence="3">
    <location>
        <begin position="151"/>
        <end position="152"/>
    </location>
    <ligand>
        <name>GMP</name>
        <dbReference type="ChEBI" id="CHEBI:58115"/>
    </ligand>
</feature>
<feature type="binding site" evidence="3">
    <location>
        <position position="158"/>
    </location>
    <ligand>
        <name>GMP</name>
        <dbReference type="ChEBI" id="CHEBI:58115"/>
    </ligand>
</feature>
<feature type="binding site" evidence="3">
    <location>
        <position position="164"/>
    </location>
    <ligand>
        <name>diphosphate</name>
        <dbReference type="ChEBI" id="CHEBI:33019"/>
    </ligand>
</feature>
<organism>
    <name type="scientific">Staphylococcus aureus (strain N315)</name>
    <dbReference type="NCBI Taxonomy" id="158879"/>
    <lineage>
        <taxon>Bacteria</taxon>
        <taxon>Bacillati</taxon>
        <taxon>Bacillota</taxon>
        <taxon>Bacilli</taxon>
        <taxon>Bacillales</taxon>
        <taxon>Staphylococcaceae</taxon>
        <taxon>Staphylococcus</taxon>
    </lineage>
</organism>
<dbReference type="EC" id="2.4.2.8" evidence="3"/>
<dbReference type="EMBL" id="BA000018">
    <property type="protein sequence ID" value="BAB41698.1"/>
    <property type="molecule type" value="Genomic_DNA"/>
</dbReference>
<dbReference type="PIR" id="G89817">
    <property type="entry name" value="G89817"/>
</dbReference>
<dbReference type="RefSeq" id="WP_000551283.1">
    <property type="nucleotide sequence ID" value="NC_002745.2"/>
</dbReference>
<dbReference type="SMR" id="P99085"/>
<dbReference type="EnsemblBacteria" id="BAB41698">
    <property type="protein sequence ID" value="BAB41698"/>
    <property type="gene ID" value="BAB41698"/>
</dbReference>
<dbReference type="KEGG" id="sau:SA0468"/>
<dbReference type="HOGENOM" id="CLU_073615_0_0_9"/>
<dbReference type="UniPathway" id="UPA00591">
    <property type="reaction ID" value="UER00648"/>
</dbReference>
<dbReference type="UniPathway" id="UPA00909">
    <property type="reaction ID" value="UER00887"/>
</dbReference>
<dbReference type="GO" id="GO:0005829">
    <property type="term" value="C:cytosol"/>
    <property type="evidence" value="ECO:0007669"/>
    <property type="project" value="TreeGrafter"/>
</dbReference>
<dbReference type="GO" id="GO:0052657">
    <property type="term" value="F:guanine phosphoribosyltransferase activity"/>
    <property type="evidence" value="ECO:0007669"/>
    <property type="project" value="RHEA"/>
</dbReference>
<dbReference type="GO" id="GO:0004422">
    <property type="term" value="F:hypoxanthine phosphoribosyltransferase activity"/>
    <property type="evidence" value="ECO:0007669"/>
    <property type="project" value="InterPro"/>
</dbReference>
<dbReference type="GO" id="GO:0000287">
    <property type="term" value="F:magnesium ion binding"/>
    <property type="evidence" value="ECO:0007669"/>
    <property type="project" value="TreeGrafter"/>
</dbReference>
<dbReference type="GO" id="GO:0000166">
    <property type="term" value="F:nucleotide binding"/>
    <property type="evidence" value="ECO:0007669"/>
    <property type="project" value="UniProtKB-KW"/>
</dbReference>
<dbReference type="GO" id="GO:0032263">
    <property type="term" value="P:GMP salvage"/>
    <property type="evidence" value="ECO:0007669"/>
    <property type="project" value="UniProtKB-UniPathway"/>
</dbReference>
<dbReference type="GO" id="GO:0006178">
    <property type="term" value="P:guanine salvage"/>
    <property type="evidence" value="ECO:0007669"/>
    <property type="project" value="TreeGrafter"/>
</dbReference>
<dbReference type="GO" id="GO:0046100">
    <property type="term" value="P:hypoxanthine metabolic process"/>
    <property type="evidence" value="ECO:0007669"/>
    <property type="project" value="TreeGrafter"/>
</dbReference>
<dbReference type="GO" id="GO:0032264">
    <property type="term" value="P:IMP salvage"/>
    <property type="evidence" value="ECO:0007669"/>
    <property type="project" value="UniProtKB-UniPathway"/>
</dbReference>
<dbReference type="GO" id="GO:0006166">
    <property type="term" value="P:purine ribonucleoside salvage"/>
    <property type="evidence" value="ECO:0007669"/>
    <property type="project" value="UniProtKB-KW"/>
</dbReference>
<dbReference type="CDD" id="cd06223">
    <property type="entry name" value="PRTases_typeI"/>
    <property type="match status" value="1"/>
</dbReference>
<dbReference type="FunFam" id="3.40.50.2020:FF:000006">
    <property type="entry name" value="Hypoxanthine phosphoribosyltransferase"/>
    <property type="match status" value="1"/>
</dbReference>
<dbReference type="Gene3D" id="3.40.50.2020">
    <property type="match status" value="1"/>
</dbReference>
<dbReference type="InterPro" id="IPR050408">
    <property type="entry name" value="HGPRT"/>
</dbReference>
<dbReference type="InterPro" id="IPR005904">
    <property type="entry name" value="Hxn_phspho_trans"/>
</dbReference>
<dbReference type="InterPro" id="IPR000836">
    <property type="entry name" value="PRibTrfase_dom"/>
</dbReference>
<dbReference type="InterPro" id="IPR029057">
    <property type="entry name" value="PRTase-like"/>
</dbReference>
<dbReference type="NCBIfam" id="TIGR01203">
    <property type="entry name" value="HGPRTase"/>
    <property type="match status" value="1"/>
</dbReference>
<dbReference type="PANTHER" id="PTHR43340:SF1">
    <property type="entry name" value="HYPOXANTHINE PHOSPHORIBOSYLTRANSFERASE"/>
    <property type="match status" value="1"/>
</dbReference>
<dbReference type="PANTHER" id="PTHR43340">
    <property type="entry name" value="HYPOXANTHINE-GUANINE PHOSPHORIBOSYLTRANSFERASE"/>
    <property type="match status" value="1"/>
</dbReference>
<dbReference type="Pfam" id="PF00156">
    <property type="entry name" value="Pribosyltran"/>
    <property type="match status" value="1"/>
</dbReference>
<dbReference type="SUPFAM" id="SSF53271">
    <property type="entry name" value="PRTase-like"/>
    <property type="match status" value="1"/>
</dbReference>
<comment type="function">
    <text evidence="3">Purine salvage pathway enzyme that catalyzes the transfer of the ribosyl-5-phosphate group from 5-phospho-alpha-D-ribose 1-diphosphate (PRPP) to the N9 position of the 6-oxopurines hypoxanthine and guanine to form the corresponding ribonucleotides IMP (inosine 5'-monophosphate) and GMP (guanosine 5'-monophosphate), with the release of PPi.</text>
</comment>
<comment type="catalytic activity">
    <reaction evidence="3">
        <text>IMP + diphosphate = hypoxanthine + 5-phospho-alpha-D-ribose 1-diphosphate</text>
        <dbReference type="Rhea" id="RHEA:17973"/>
        <dbReference type="ChEBI" id="CHEBI:17368"/>
        <dbReference type="ChEBI" id="CHEBI:33019"/>
        <dbReference type="ChEBI" id="CHEBI:58017"/>
        <dbReference type="ChEBI" id="CHEBI:58053"/>
        <dbReference type="EC" id="2.4.2.8"/>
    </reaction>
    <physiologicalReaction direction="right-to-left" evidence="3">
        <dbReference type="Rhea" id="RHEA:17975"/>
    </physiologicalReaction>
</comment>
<comment type="catalytic activity">
    <reaction evidence="3">
        <text>GMP + diphosphate = guanine + 5-phospho-alpha-D-ribose 1-diphosphate</text>
        <dbReference type="Rhea" id="RHEA:25424"/>
        <dbReference type="ChEBI" id="CHEBI:16235"/>
        <dbReference type="ChEBI" id="CHEBI:33019"/>
        <dbReference type="ChEBI" id="CHEBI:58017"/>
        <dbReference type="ChEBI" id="CHEBI:58115"/>
        <dbReference type="EC" id="2.4.2.8"/>
    </reaction>
    <physiologicalReaction direction="right-to-left" evidence="3">
        <dbReference type="Rhea" id="RHEA:25426"/>
    </physiologicalReaction>
</comment>
<comment type="cofactor">
    <cofactor evidence="3">
        <name>Mg(2+)</name>
        <dbReference type="ChEBI" id="CHEBI:18420"/>
    </cofactor>
</comment>
<comment type="pathway">
    <text evidence="3">Purine metabolism; IMP biosynthesis via salvage pathway; IMP from hypoxanthine: step 1/1.</text>
</comment>
<comment type="pathway">
    <text evidence="3">Purine metabolism; GMP biosynthesis via salvage pathway; GMP from guanine: step 1/1.</text>
</comment>
<comment type="subcellular location">
    <subcellularLocation>
        <location evidence="1">Cytoplasm</location>
    </subcellularLocation>
</comment>
<comment type="similarity">
    <text evidence="4">Belongs to the purine/pyrimidine phosphoribosyltransferase family.</text>
</comment>
<evidence type="ECO:0000250" key="1"/>
<evidence type="ECO:0000250" key="2">
    <source>
        <dbReference type="UniProtKB" id="P0A9M2"/>
    </source>
</evidence>
<evidence type="ECO:0000250" key="3">
    <source>
        <dbReference type="UniProtKB" id="P9WHQ9"/>
    </source>
</evidence>
<evidence type="ECO:0000305" key="4"/>